<comment type="function">
    <text evidence="1 5">Component of the A-type ATP synthase that produces ATP from ADP in the presence of a proton gradient across the membrane. The B chain is a regulatory subunit.</text>
</comment>
<comment type="biophysicochemical properties">
    <phDependence>
        <text evidence="2">Optimum pH is 5.2 for ATP hydrolysis.</text>
    </phDependence>
</comment>
<comment type="subunit">
    <text evidence="2">Has multiple subunits, A(3), B(3), C, D, E, F, G, I and K(x); there may be a few other subunits as well.</text>
</comment>
<comment type="subcellular location">
    <subcellularLocation>
        <location evidence="1 2">Cell membrane</location>
        <topology evidence="1 5">Peripheral membrane protein</topology>
    </subcellularLocation>
</comment>
<comment type="miscellaneous">
    <text evidence="5">This organism has both a Na(+)-translocating F1F0 ATP synthase and this H(+)-translocating A1A0 ATP synthase.</text>
</comment>
<comment type="similarity">
    <text evidence="1">Belongs to the ATPase alpha/beta chains family.</text>
</comment>
<comment type="sequence caution" evidence="4">
    <conflict type="erroneous initiation">
        <sequence resource="EMBL-CDS" id="AAM30475"/>
    </conflict>
    <text>Extended N-terminus.</text>
</comment>
<keyword id="KW-0002">3D-structure</keyword>
<keyword id="KW-0066">ATP synthesis</keyword>
<keyword id="KW-1003">Cell membrane</keyword>
<keyword id="KW-0375">Hydrogen ion transport</keyword>
<keyword id="KW-0406">Ion transport</keyword>
<keyword id="KW-0472">Membrane</keyword>
<keyword id="KW-0813">Transport</keyword>
<accession>Q60187</accession>
<evidence type="ECO:0000255" key="1">
    <source>
        <dbReference type="HAMAP-Rule" id="MF_00310"/>
    </source>
</evidence>
<evidence type="ECO:0000269" key="2">
    <source>
    </source>
</evidence>
<evidence type="ECO:0000303" key="3">
    <source>
    </source>
</evidence>
<evidence type="ECO:0000305" key="4"/>
<evidence type="ECO:0000305" key="5">
    <source>
    </source>
</evidence>
<evidence type="ECO:0007829" key="6">
    <source>
        <dbReference type="PDB" id="2C61"/>
    </source>
</evidence>
<evidence type="ECO:0007829" key="7">
    <source>
        <dbReference type="PDB" id="2RKW"/>
    </source>
</evidence>
<evidence type="ECO:0007829" key="8">
    <source>
        <dbReference type="PDB" id="3DSR"/>
    </source>
</evidence>
<evidence type="ECO:0007829" key="9">
    <source>
        <dbReference type="PDB" id="3EIU"/>
    </source>
</evidence>
<evidence type="ECO:0007829" key="10">
    <source>
        <dbReference type="PDB" id="3TGW"/>
    </source>
</evidence>
<evidence type="ECO:0007829" key="11">
    <source>
        <dbReference type="PDB" id="3TIV"/>
    </source>
</evidence>
<name>AATB_METMA</name>
<organism>
    <name type="scientific">Methanosarcina mazei (strain ATCC BAA-159 / DSM 3647 / Goe1 / Go1 / JCM 11833 / OCM 88)</name>
    <name type="common">Methanosarcina frisia</name>
    <dbReference type="NCBI Taxonomy" id="192952"/>
    <lineage>
        <taxon>Archaea</taxon>
        <taxon>Methanobacteriati</taxon>
        <taxon>Methanobacteriota</taxon>
        <taxon>Stenosarchaea group</taxon>
        <taxon>Methanomicrobia</taxon>
        <taxon>Methanosarcinales</taxon>
        <taxon>Methanosarcinaceae</taxon>
        <taxon>Methanosarcina</taxon>
    </lineage>
</organism>
<protein>
    <recommendedName>
        <fullName evidence="1">A-type ATP synthase subunit B</fullName>
    </recommendedName>
    <alternativeName>
        <fullName evidence="3">A1A0 ATPase subunit B</fullName>
    </alternativeName>
</protein>
<reference key="1">
    <citation type="journal article" date="1996" name="J. Biol. Chem.">
        <title>Subunit structure and organization of the genes of the A1A0 ATPase from the Archaeon Methanosarcina mazei Go1.</title>
        <authorList>
            <person name="Wilms R."/>
            <person name="Freiberg C."/>
            <person name="Wegerle E."/>
            <person name="Meier I."/>
            <person name="Mayer F."/>
            <person name="Mueller V."/>
        </authorList>
    </citation>
    <scope>NUCLEOTIDE SEQUENCE [GENOMIC DNA]</scope>
    <scope>FUNCTION</scope>
    <scope>BIOPHYSICOCHEMICAL PROPERTIES</scope>
    <scope>SUBUNIT</scope>
    <scope>SUBCELLULAR LOCATION</scope>
    <source>
        <strain>ATCC BAA-159 / DSM 3647 / Goe1 / Go1 / JCM 11833 / OCM 88</strain>
    </source>
</reference>
<reference key="2">
    <citation type="journal article" date="2002" name="J. Mol. Microbiol. Biotechnol.">
        <title>The genome of Methanosarcina mazei: evidence for lateral gene transfer between Bacteria and Archaea.</title>
        <authorList>
            <person name="Deppenmeier U."/>
            <person name="Johann A."/>
            <person name="Hartsch T."/>
            <person name="Merkl R."/>
            <person name="Schmitz R.A."/>
            <person name="Martinez-Arias R."/>
            <person name="Henne A."/>
            <person name="Wiezer A."/>
            <person name="Baeumer S."/>
            <person name="Jacobi C."/>
            <person name="Brueggemann H."/>
            <person name="Lienard T."/>
            <person name="Christmann A."/>
            <person name="Boemecke M."/>
            <person name="Steckel S."/>
            <person name="Bhattacharyya A."/>
            <person name="Lykidis A."/>
            <person name="Overbeek R."/>
            <person name="Klenk H.-P."/>
            <person name="Gunsalus R.P."/>
            <person name="Fritz H.-J."/>
            <person name="Gottschalk G."/>
        </authorList>
    </citation>
    <scope>NUCLEOTIDE SEQUENCE [LARGE SCALE GENOMIC DNA]</scope>
    <source>
        <strain>ATCC BAA-159 / DSM 3647 / Goe1 / Go1 / JCM 11833 / OCM 88</strain>
    </source>
</reference>
<gene>
    <name evidence="1" type="primary">atpB</name>
    <name evidence="3" type="synonym">ahaB</name>
    <name type="ordered locus">MM_0779</name>
</gene>
<proteinExistence type="evidence at protein level"/>
<feature type="chain" id="PRO_0000144657" description="A-type ATP synthase subunit B">
    <location>
        <begin position="1"/>
        <end position="460"/>
    </location>
</feature>
<feature type="sequence conflict" description="In Ref. 1; AAC06376." evidence="4" ref="1">
    <original>A</original>
    <variation>V</variation>
    <location>
        <position position="2"/>
    </location>
</feature>
<feature type="sequence conflict" description="In Ref. 1; AAC06376." evidence="4" ref="1">
    <original>ADIVVVQVFEGTGGLDKDCG</original>
    <variation>LTLWLSRFSKVLVGLTRTAV</variation>
    <location>
        <begin position="49"/>
        <end position="68"/>
    </location>
</feature>
<feature type="sequence conflict" description="In Ref. 1; AAC06376." evidence="4" ref="1">
    <original>S</original>
    <variation>F</variation>
    <location>
        <position position="90"/>
    </location>
</feature>
<feature type="sequence conflict" description="In Ref. 1; AAC06376." evidence="4" ref="1">
    <original>D</original>
    <variation>E</variation>
    <location>
        <position position="215"/>
    </location>
</feature>
<feature type="strand" evidence="6">
    <location>
        <begin position="15"/>
        <end position="19"/>
    </location>
</feature>
<feature type="strand" evidence="6">
    <location>
        <begin position="29"/>
        <end position="33"/>
    </location>
</feature>
<feature type="strand" evidence="9">
    <location>
        <begin position="35"/>
        <end position="37"/>
    </location>
</feature>
<feature type="strand" evidence="6">
    <location>
        <begin position="39"/>
        <end position="47"/>
    </location>
</feature>
<feature type="strand" evidence="6">
    <location>
        <begin position="49"/>
        <end position="56"/>
    </location>
</feature>
<feature type="strand" evidence="10">
    <location>
        <begin position="58"/>
        <end position="60"/>
    </location>
</feature>
<feature type="strand" evidence="6">
    <location>
        <begin position="72"/>
        <end position="75"/>
    </location>
</feature>
<feature type="strand" evidence="6">
    <location>
        <begin position="77"/>
        <end position="80"/>
    </location>
</feature>
<feature type="helix" evidence="6">
    <location>
        <begin position="82"/>
        <end position="84"/>
    </location>
</feature>
<feature type="strand" evidence="6">
    <location>
        <begin position="88"/>
        <end position="90"/>
    </location>
</feature>
<feature type="strand" evidence="8">
    <location>
        <begin position="91"/>
        <end position="93"/>
    </location>
</feature>
<feature type="strand" evidence="6">
    <location>
        <begin position="95"/>
        <end position="98"/>
    </location>
</feature>
<feature type="strand" evidence="6">
    <location>
        <begin position="105"/>
        <end position="112"/>
    </location>
</feature>
<feature type="turn" evidence="8">
    <location>
        <begin position="113"/>
        <end position="115"/>
    </location>
</feature>
<feature type="strand" evidence="11">
    <location>
        <begin position="124"/>
        <end position="126"/>
    </location>
</feature>
<feature type="helix" evidence="6">
    <location>
        <begin position="132"/>
        <end position="135"/>
    </location>
</feature>
<feature type="strand" evidence="6">
    <location>
        <begin position="148"/>
        <end position="150"/>
    </location>
</feature>
<feature type="helix" evidence="6">
    <location>
        <begin position="156"/>
        <end position="166"/>
    </location>
</feature>
<feature type="strand" evidence="7">
    <location>
        <begin position="170"/>
        <end position="174"/>
    </location>
</feature>
<feature type="strand" evidence="6">
    <location>
        <begin position="176"/>
        <end position="185"/>
    </location>
</feature>
<feature type="helix" evidence="6">
    <location>
        <begin position="187"/>
        <end position="200"/>
    </location>
</feature>
<feature type="helix" evidence="6">
    <location>
        <begin position="202"/>
        <end position="205"/>
    </location>
</feature>
<feature type="strand" evidence="6">
    <location>
        <begin position="206"/>
        <end position="212"/>
    </location>
</feature>
<feature type="helix" evidence="6">
    <location>
        <begin position="217"/>
        <end position="238"/>
    </location>
</feature>
<feature type="strand" evidence="6">
    <location>
        <begin position="241"/>
        <end position="247"/>
    </location>
</feature>
<feature type="helix" evidence="6">
    <location>
        <begin position="249"/>
        <end position="256"/>
    </location>
</feature>
<feature type="helix" evidence="6">
    <location>
        <begin position="260"/>
        <end position="262"/>
    </location>
</feature>
<feature type="helix" evidence="6">
    <location>
        <begin position="275"/>
        <end position="284"/>
    </location>
</feature>
<feature type="strand" evidence="6">
    <location>
        <begin position="288"/>
        <end position="290"/>
    </location>
</feature>
<feature type="strand" evidence="6">
    <location>
        <begin position="296"/>
        <end position="304"/>
    </location>
</feature>
<feature type="turn" evidence="6">
    <location>
        <begin position="309"/>
        <end position="311"/>
    </location>
</feature>
<feature type="helix" evidence="6">
    <location>
        <begin position="318"/>
        <end position="321"/>
    </location>
</feature>
<feature type="strand" evidence="6">
    <location>
        <begin position="324"/>
        <end position="328"/>
    </location>
</feature>
<feature type="helix" evidence="6">
    <location>
        <begin position="330"/>
        <end position="334"/>
    </location>
</feature>
<feature type="turn" evidence="6">
    <location>
        <begin position="343"/>
        <end position="345"/>
    </location>
</feature>
<feature type="helix" evidence="6">
    <location>
        <begin position="351"/>
        <end position="353"/>
    </location>
</feature>
<feature type="turn" evidence="6">
    <location>
        <begin position="357"/>
        <end position="359"/>
    </location>
</feature>
<feature type="helix" evidence="6">
    <location>
        <begin position="364"/>
        <end position="388"/>
    </location>
</feature>
<feature type="helix" evidence="6">
    <location>
        <begin position="390"/>
        <end position="392"/>
    </location>
</feature>
<feature type="helix" evidence="6">
    <location>
        <begin position="395"/>
        <end position="410"/>
    </location>
</feature>
<feature type="helix" evidence="6">
    <location>
        <begin position="422"/>
        <end position="433"/>
    </location>
</feature>
<feature type="helix" evidence="6">
    <location>
        <begin position="438"/>
        <end position="440"/>
    </location>
</feature>
<feature type="helix" evidence="6">
    <location>
        <begin position="446"/>
        <end position="452"/>
    </location>
</feature>
<feature type="turn" evidence="10">
    <location>
        <begin position="454"/>
        <end position="456"/>
    </location>
</feature>
<dbReference type="EMBL" id="U47274">
    <property type="protein sequence ID" value="AAC06376.1"/>
    <property type="molecule type" value="Genomic_DNA"/>
</dbReference>
<dbReference type="EMBL" id="AE008384">
    <property type="protein sequence ID" value="AAM30475.1"/>
    <property type="status" value="ALT_INIT"/>
    <property type="molecule type" value="Genomic_DNA"/>
</dbReference>
<dbReference type="PIR" id="T45108">
    <property type="entry name" value="T45108"/>
</dbReference>
<dbReference type="RefSeq" id="WP_015411348.1">
    <property type="nucleotide sequence ID" value="NC_003901.1"/>
</dbReference>
<dbReference type="PDB" id="2C61">
    <property type="method" value="X-ray"/>
    <property type="resolution" value="1.50 A"/>
    <property type="chains" value="A/B=1-460"/>
</dbReference>
<dbReference type="PDB" id="2RKW">
    <property type="method" value="X-ray"/>
    <property type="resolution" value="2.81 A"/>
    <property type="chains" value="A/B=1-460"/>
</dbReference>
<dbReference type="PDB" id="3B2Q">
    <property type="method" value="X-ray"/>
    <property type="resolution" value="2.10 A"/>
    <property type="chains" value="A/B=1-460"/>
</dbReference>
<dbReference type="PDB" id="3DSR">
    <property type="method" value="X-ray"/>
    <property type="resolution" value="2.70 A"/>
    <property type="chains" value="A/B=1-460"/>
</dbReference>
<dbReference type="PDB" id="3EIU">
    <property type="method" value="X-ray"/>
    <property type="resolution" value="3.43 A"/>
    <property type="chains" value="A/B=1-460"/>
</dbReference>
<dbReference type="PDB" id="3SSA">
    <property type="method" value="X-ray"/>
    <property type="resolution" value="1.70 A"/>
    <property type="chains" value="A/B=1-460"/>
</dbReference>
<dbReference type="PDB" id="3TGW">
    <property type="method" value="X-ray"/>
    <property type="resolution" value="1.75 A"/>
    <property type="chains" value="A/B=1-460"/>
</dbReference>
<dbReference type="PDB" id="3TIV">
    <property type="method" value="X-ray"/>
    <property type="resolution" value="1.75 A"/>
    <property type="chains" value="A/B=1-460"/>
</dbReference>
<dbReference type="PDBsum" id="2C61"/>
<dbReference type="PDBsum" id="2RKW"/>
<dbReference type="PDBsum" id="3B2Q"/>
<dbReference type="PDBsum" id="3DSR"/>
<dbReference type="PDBsum" id="3EIU"/>
<dbReference type="PDBsum" id="3SSA"/>
<dbReference type="PDBsum" id="3TGW"/>
<dbReference type="PDBsum" id="3TIV"/>
<dbReference type="SMR" id="Q60187"/>
<dbReference type="TCDB" id="3.A.2.3.1">
    <property type="family name" value="the h+- or na+-translocating f-type, v-type and a-type atpase (f-atpase) superfamily"/>
</dbReference>
<dbReference type="KEGG" id="mma:MM_0779"/>
<dbReference type="PATRIC" id="fig|192952.21.peg.927"/>
<dbReference type="eggNOG" id="arCOG00865">
    <property type="taxonomic scope" value="Archaea"/>
</dbReference>
<dbReference type="HOGENOM" id="CLU_022916_0_0_2"/>
<dbReference type="EvolutionaryTrace" id="Q60187"/>
<dbReference type="Proteomes" id="UP000000595">
    <property type="component" value="Chromosome"/>
</dbReference>
<dbReference type="GO" id="GO:0005886">
    <property type="term" value="C:plasma membrane"/>
    <property type="evidence" value="ECO:0007669"/>
    <property type="project" value="UniProtKB-SubCell"/>
</dbReference>
<dbReference type="GO" id="GO:0033178">
    <property type="term" value="C:proton-transporting two-sector ATPase complex, catalytic domain"/>
    <property type="evidence" value="ECO:0007669"/>
    <property type="project" value="InterPro"/>
</dbReference>
<dbReference type="GO" id="GO:0005524">
    <property type="term" value="F:ATP binding"/>
    <property type="evidence" value="ECO:0007669"/>
    <property type="project" value="UniProtKB-UniRule"/>
</dbReference>
<dbReference type="GO" id="GO:0046933">
    <property type="term" value="F:proton-transporting ATP synthase activity, rotational mechanism"/>
    <property type="evidence" value="ECO:0007669"/>
    <property type="project" value="UniProtKB-UniRule"/>
</dbReference>
<dbReference type="GO" id="GO:0042777">
    <property type="term" value="P:proton motive force-driven plasma membrane ATP synthesis"/>
    <property type="evidence" value="ECO:0007669"/>
    <property type="project" value="UniProtKB-UniRule"/>
</dbReference>
<dbReference type="CDD" id="cd18112">
    <property type="entry name" value="ATP-synt_V_A-type_beta_C"/>
    <property type="match status" value="1"/>
</dbReference>
<dbReference type="CDD" id="cd18118">
    <property type="entry name" value="ATP-synt_V_A-type_beta_N"/>
    <property type="match status" value="1"/>
</dbReference>
<dbReference type="CDD" id="cd01135">
    <property type="entry name" value="V_A-ATPase_B"/>
    <property type="match status" value="1"/>
</dbReference>
<dbReference type="Gene3D" id="3.40.50.12240">
    <property type="match status" value="1"/>
</dbReference>
<dbReference type="HAMAP" id="MF_00310">
    <property type="entry name" value="ATP_synth_B_arch"/>
    <property type="match status" value="1"/>
</dbReference>
<dbReference type="InterPro" id="IPR055190">
    <property type="entry name" value="ATP-synt_VA_C"/>
</dbReference>
<dbReference type="InterPro" id="IPR020003">
    <property type="entry name" value="ATPase_a/bsu_AS"/>
</dbReference>
<dbReference type="InterPro" id="IPR005724">
    <property type="entry name" value="ATPase_A1-cplx_bsu"/>
</dbReference>
<dbReference type="InterPro" id="IPR004100">
    <property type="entry name" value="ATPase_F1/V1/A1_a/bsu_N"/>
</dbReference>
<dbReference type="InterPro" id="IPR000194">
    <property type="entry name" value="ATPase_F1/V1/A1_a/bsu_nucl-bd"/>
</dbReference>
<dbReference type="InterPro" id="IPR027417">
    <property type="entry name" value="P-loop_NTPase"/>
</dbReference>
<dbReference type="InterPro" id="IPR022879">
    <property type="entry name" value="V-ATPase_su_B/beta"/>
</dbReference>
<dbReference type="NCBIfam" id="TIGR01041">
    <property type="entry name" value="ATP_syn_B_arch"/>
    <property type="match status" value="1"/>
</dbReference>
<dbReference type="NCBIfam" id="NF003235">
    <property type="entry name" value="PRK04196.1"/>
    <property type="match status" value="1"/>
</dbReference>
<dbReference type="PANTHER" id="PTHR43389">
    <property type="entry name" value="V-TYPE PROTON ATPASE SUBUNIT B"/>
    <property type="match status" value="1"/>
</dbReference>
<dbReference type="PANTHER" id="PTHR43389:SF4">
    <property type="entry name" value="V-TYPE PROTON ATPASE SUBUNIT B"/>
    <property type="match status" value="1"/>
</dbReference>
<dbReference type="Pfam" id="PF00006">
    <property type="entry name" value="ATP-synt_ab"/>
    <property type="match status" value="1"/>
</dbReference>
<dbReference type="Pfam" id="PF02874">
    <property type="entry name" value="ATP-synt_ab_N"/>
    <property type="match status" value="1"/>
</dbReference>
<dbReference type="Pfam" id="PF22919">
    <property type="entry name" value="ATP-synt_VA_C"/>
    <property type="match status" value="1"/>
</dbReference>
<dbReference type="PIRSF" id="PIRSF039114">
    <property type="entry name" value="V-ATPsynth_beta/V-ATPase_B"/>
    <property type="match status" value="1"/>
</dbReference>
<dbReference type="SUPFAM" id="SSF47917">
    <property type="entry name" value="C-terminal domain of alpha and beta subunits of F1 ATP synthase"/>
    <property type="match status" value="1"/>
</dbReference>
<dbReference type="SUPFAM" id="SSF52540">
    <property type="entry name" value="P-loop containing nucleoside triphosphate hydrolases"/>
    <property type="match status" value="1"/>
</dbReference>
<dbReference type="PROSITE" id="PS00152">
    <property type="entry name" value="ATPASE_ALPHA_BETA"/>
    <property type="match status" value="1"/>
</dbReference>
<sequence length="460" mass="50282">MAKEYKTITQIAGPLIFVEKTEPVGYNEIVNIKMGDGTVRRGQVLDSSADIVVVQVFEGTGGLDKDCGVIFTGETLKLPASVDLLGRILSGSGEPRDGGPRIVPDQLLDINGAAMNPYARLPPKDFIQTGISTIDGTNTLVRGQKLPIFSASGLPHNEIALQIARQASVPGSESAFAVVFAAMGITNEEAQYFMSDFEKTGALERAVVFLNLADDPAVERIVTPRMALTAAEYLAYEHGMHVLVILTDITNYAEALRQMGAARNEVPGRRGYPGYMYTDLATLYERAGIVKGAKGSVTQIPILSMPGDDITHPIPDLSGYITEGQIVVARELHRKGIYPPINVLPSLSRLMNSGIGAGKTREDHKAVSDQMYAGYAEGRDLRGLVAIVGKEALSERDTKFLEFADLFEDKFVRQGRNENRTIEDTLEIGWQILTHLPENQLGRIDNKYIQKYHPAHRKAK</sequence>